<gene>
    <name evidence="1" type="primary">mraY</name>
    <name type="ordered locus">Lcho_0519</name>
</gene>
<reference key="1">
    <citation type="submission" date="2008-03" db="EMBL/GenBank/DDBJ databases">
        <title>Complete sequence of Leptothrix cholodnii SP-6.</title>
        <authorList>
            <consortium name="US DOE Joint Genome Institute"/>
            <person name="Copeland A."/>
            <person name="Lucas S."/>
            <person name="Lapidus A."/>
            <person name="Glavina del Rio T."/>
            <person name="Dalin E."/>
            <person name="Tice H."/>
            <person name="Bruce D."/>
            <person name="Goodwin L."/>
            <person name="Pitluck S."/>
            <person name="Chertkov O."/>
            <person name="Brettin T."/>
            <person name="Detter J.C."/>
            <person name="Han C."/>
            <person name="Kuske C.R."/>
            <person name="Schmutz J."/>
            <person name="Larimer F."/>
            <person name="Land M."/>
            <person name="Hauser L."/>
            <person name="Kyrpides N."/>
            <person name="Lykidis A."/>
            <person name="Emerson D."/>
            <person name="Richardson P."/>
        </authorList>
    </citation>
    <scope>NUCLEOTIDE SEQUENCE [LARGE SCALE GENOMIC DNA]</scope>
    <source>
        <strain>ATCC 51168 / LMG 8142 / SP-6</strain>
    </source>
</reference>
<sequence>MLVSLANWLQGHYPDSFGFLRVVQYLTFRAVMSAMTALLLGLVFGPWVIRRLTELKIGQPVREYGVQSHLVKTGTPTMGGVLILLSIAVSTLLWFDWSNRFVWVVMLVTFGFGAIGWVDDWRKVVQKNPEGMASGEKYLWQSLIGLVAAIYLAFSVSETSNLRVLELFLRWVGSGFSNDLPPKADLIVPFFKSVSYPLGVFGFIFLTYFVIVGASNAVNLTDGLDGLAIMPVVLVGSALGLFAYVTGNSVFSKYLLLPHIPGAGELLIFCAAMAGAGLAFLWFNAYPAQVFMGDVGALALGGALGTIAVIVRQEIVLGIMGGIFVVEALSVMAQVAYFKYTKKRYGQGRRILLMAPLHHHYEKKGWEETQVVVRFWIITMLLCLVGLSTLKLR</sequence>
<keyword id="KW-0131">Cell cycle</keyword>
<keyword id="KW-0132">Cell division</keyword>
<keyword id="KW-0997">Cell inner membrane</keyword>
<keyword id="KW-1003">Cell membrane</keyword>
<keyword id="KW-0133">Cell shape</keyword>
<keyword id="KW-0961">Cell wall biogenesis/degradation</keyword>
<keyword id="KW-0460">Magnesium</keyword>
<keyword id="KW-0472">Membrane</keyword>
<keyword id="KW-0479">Metal-binding</keyword>
<keyword id="KW-0573">Peptidoglycan synthesis</keyword>
<keyword id="KW-1185">Reference proteome</keyword>
<keyword id="KW-0808">Transferase</keyword>
<keyword id="KW-0812">Transmembrane</keyword>
<keyword id="KW-1133">Transmembrane helix</keyword>
<proteinExistence type="inferred from homology"/>
<accession>B1XYR0</accession>
<dbReference type="EC" id="2.7.8.13" evidence="1"/>
<dbReference type="EMBL" id="CP001013">
    <property type="protein sequence ID" value="ACB32794.1"/>
    <property type="molecule type" value="Genomic_DNA"/>
</dbReference>
<dbReference type="RefSeq" id="WP_012345556.1">
    <property type="nucleotide sequence ID" value="NC_010524.1"/>
</dbReference>
<dbReference type="SMR" id="B1XYR0"/>
<dbReference type="STRING" id="395495.Lcho_0519"/>
<dbReference type="KEGG" id="lch:Lcho_0519"/>
<dbReference type="eggNOG" id="COG0472">
    <property type="taxonomic scope" value="Bacteria"/>
</dbReference>
<dbReference type="HOGENOM" id="CLU_023982_0_0_4"/>
<dbReference type="OrthoDB" id="9805475at2"/>
<dbReference type="UniPathway" id="UPA00219"/>
<dbReference type="Proteomes" id="UP000001693">
    <property type="component" value="Chromosome"/>
</dbReference>
<dbReference type="GO" id="GO:0005886">
    <property type="term" value="C:plasma membrane"/>
    <property type="evidence" value="ECO:0007669"/>
    <property type="project" value="UniProtKB-SubCell"/>
</dbReference>
<dbReference type="GO" id="GO:0046872">
    <property type="term" value="F:metal ion binding"/>
    <property type="evidence" value="ECO:0007669"/>
    <property type="project" value="UniProtKB-KW"/>
</dbReference>
<dbReference type="GO" id="GO:0008963">
    <property type="term" value="F:phospho-N-acetylmuramoyl-pentapeptide-transferase activity"/>
    <property type="evidence" value="ECO:0007669"/>
    <property type="project" value="UniProtKB-UniRule"/>
</dbReference>
<dbReference type="GO" id="GO:0051992">
    <property type="term" value="F:UDP-N-acetylmuramoyl-L-alanyl-D-glutamyl-meso-2,6-diaminopimelyl-D-alanyl-D-alanine:undecaprenyl-phosphate transferase activity"/>
    <property type="evidence" value="ECO:0007669"/>
    <property type="project" value="RHEA"/>
</dbReference>
<dbReference type="GO" id="GO:0051301">
    <property type="term" value="P:cell division"/>
    <property type="evidence" value="ECO:0007669"/>
    <property type="project" value="UniProtKB-KW"/>
</dbReference>
<dbReference type="GO" id="GO:0071555">
    <property type="term" value="P:cell wall organization"/>
    <property type="evidence" value="ECO:0007669"/>
    <property type="project" value="UniProtKB-KW"/>
</dbReference>
<dbReference type="GO" id="GO:0009252">
    <property type="term" value="P:peptidoglycan biosynthetic process"/>
    <property type="evidence" value="ECO:0007669"/>
    <property type="project" value="UniProtKB-UniRule"/>
</dbReference>
<dbReference type="GO" id="GO:0008360">
    <property type="term" value="P:regulation of cell shape"/>
    <property type="evidence" value="ECO:0007669"/>
    <property type="project" value="UniProtKB-KW"/>
</dbReference>
<dbReference type="CDD" id="cd06852">
    <property type="entry name" value="GT_MraY"/>
    <property type="match status" value="1"/>
</dbReference>
<dbReference type="HAMAP" id="MF_00038">
    <property type="entry name" value="MraY"/>
    <property type="match status" value="1"/>
</dbReference>
<dbReference type="InterPro" id="IPR000715">
    <property type="entry name" value="Glycosyl_transferase_4"/>
</dbReference>
<dbReference type="InterPro" id="IPR003524">
    <property type="entry name" value="PNAcMuramoyl-5peptid_Trfase"/>
</dbReference>
<dbReference type="InterPro" id="IPR018480">
    <property type="entry name" value="PNAcMuramoyl-5peptid_Trfase_CS"/>
</dbReference>
<dbReference type="NCBIfam" id="TIGR00445">
    <property type="entry name" value="mraY"/>
    <property type="match status" value="1"/>
</dbReference>
<dbReference type="PANTHER" id="PTHR22926">
    <property type="entry name" value="PHOSPHO-N-ACETYLMURAMOYL-PENTAPEPTIDE-TRANSFERASE"/>
    <property type="match status" value="1"/>
</dbReference>
<dbReference type="PANTHER" id="PTHR22926:SF5">
    <property type="entry name" value="PHOSPHO-N-ACETYLMURAMOYL-PENTAPEPTIDE-TRANSFERASE HOMOLOG"/>
    <property type="match status" value="1"/>
</dbReference>
<dbReference type="Pfam" id="PF00953">
    <property type="entry name" value="Glycos_transf_4"/>
    <property type="match status" value="1"/>
</dbReference>
<dbReference type="Pfam" id="PF10555">
    <property type="entry name" value="MraY_sig1"/>
    <property type="match status" value="1"/>
</dbReference>
<dbReference type="PROSITE" id="PS01347">
    <property type="entry name" value="MRAY_1"/>
    <property type="match status" value="1"/>
</dbReference>
<dbReference type="PROSITE" id="PS01348">
    <property type="entry name" value="MRAY_2"/>
    <property type="match status" value="1"/>
</dbReference>
<feature type="chain" id="PRO_1000090640" description="Phospho-N-acetylmuramoyl-pentapeptide-transferase">
    <location>
        <begin position="1"/>
        <end position="393"/>
    </location>
</feature>
<feature type="transmembrane region" description="Helical" evidence="1">
    <location>
        <begin position="29"/>
        <end position="49"/>
    </location>
</feature>
<feature type="transmembrane region" description="Helical" evidence="1">
    <location>
        <begin position="75"/>
        <end position="95"/>
    </location>
</feature>
<feature type="transmembrane region" description="Helical" evidence="1">
    <location>
        <begin position="101"/>
        <end position="121"/>
    </location>
</feature>
<feature type="transmembrane region" description="Helical" evidence="1">
    <location>
        <begin position="138"/>
        <end position="158"/>
    </location>
</feature>
<feature type="transmembrane region" description="Helical" evidence="1">
    <location>
        <begin position="194"/>
        <end position="214"/>
    </location>
</feature>
<feature type="transmembrane region" description="Helical" evidence="1">
    <location>
        <begin position="226"/>
        <end position="246"/>
    </location>
</feature>
<feature type="transmembrane region" description="Helical" evidence="1">
    <location>
        <begin position="263"/>
        <end position="283"/>
    </location>
</feature>
<feature type="transmembrane region" description="Helical" evidence="1">
    <location>
        <begin position="290"/>
        <end position="310"/>
    </location>
</feature>
<feature type="transmembrane region" description="Helical" evidence="1">
    <location>
        <begin position="315"/>
        <end position="335"/>
    </location>
</feature>
<feature type="transmembrane region" description="Helical" evidence="1">
    <location>
        <begin position="370"/>
        <end position="390"/>
    </location>
</feature>
<organism>
    <name type="scientific">Leptothrix cholodnii (strain ATCC 51168 / LMG 8142 / SP-6)</name>
    <name type="common">Leptothrix discophora (strain SP-6)</name>
    <dbReference type="NCBI Taxonomy" id="395495"/>
    <lineage>
        <taxon>Bacteria</taxon>
        <taxon>Pseudomonadati</taxon>
        <taxon>Pseudomonadota</taxon>
        <taxon>Betaproteobacteria</taxon>
        <taxon>Burkholderiales</taxon>
        <taxon>Sphaerotilaceae</taxon>
        <taxon>Leptothrix</taxon>
    </lineage>
</organism>
<name>MRAY_LEPCP</name>
<comment type="function">
    <text evidence="1">Catalyzes the initial step of the lipid cycle reactions in the biosynthesis of the cell wall peptidoglycan: transfers peptidoglycan precursor phospho-MurNAc-pentapeptide from UDP-MurNAc-pentapeptide onto the lipid carrier undecaprenyl phosphate, yielding undecaprenyl-pyrophosphoryl-MurNAc-pentapeptide, known as lipid I.</text>
</comment>
<comment type="catalytic activity">
    <reaction evidence="1">
        <text>UDP-N-acetyl-alpha-D-muramoyl-L-alanyl-gamma-D-glutamyl-meso-2,6-diaminopimeloyl-D-alanyl-D-alanine + di-trans,octa-cis-undecaprenyl phosphate = di-trans,octa-cis-undecaprenyl diphospho-N-acetyl-alpha-D-muramoyl-L-alanyl-D-glutamyl-meso-2,6-diaminopimeloyl-D-alanyl-D-alanine + UMP</text>
        <dbReference type="Rhea" id="RHEA:28386"/>
        <dbReference type="ChEBI" id="CHEBI:57865"/>
        <dbReference type="ChEBI" id="CHEBI:60392"/>
        <dbReference type="ChEBI" id="CHEBI:61386"/>
        <dbReference type="ChEBI" id="CHEBI:61387"/>
        <dbReference type="EC" id="2.7.8.13"/>
    </reaction>
</comment>
<comment type="cofactor">
    <cofactor evidence="1">
        <name>Mg(2+)</name>
        <dbReference type="ChEBI" id="CHEBI:18420"/>
    </cofactor>
</comment>
<comment type="pathway">
    <text evidence="1">Cell wall biogenesis; peptidoglycan biosynthesis.</text>
</comment>
<comment type="subcellular location">
    <subcellularLocation>
        <location evidence="1">Cell inner membrane</location>
        <topology evidence="1">Multi-pass membrane protein</topology>
    </subcellularLocation>
</comment>
<comment type="similarity">
    <text evidence="1">Belongs to the glycosyltransferase 4 family. MraY subfamily.</text>
</comment>
<protein>
    <recommendedName>
        <fullName evidence="1">Phospho-N-acetylmuramoyl-pentapeptide-transferase</fullName>
        <ecNumber evidence="1">2.7.8.13</ecNumber>
    </recommendedName>
    <alternativeName>
        <fullName evidence="1">UDP-MurNAc-pentapeptide phosphotransferase</fullName>
    </alternativeName>
</protein>
<evidence type="ECO:0000255" key="1">
    <source>
        <dbReference type="HAMAP-Rule" id="MF_00038"/>
    </source>
</evidence>